<reference key="1">
    <citation type="journal article" date="2003" name="Bioinformatics">
        <title>Annotation pattern of ESTs from Spodoptera frugiperda Sf9 cells and analysis of the ribosomal protein genes reveal insect-specific features and unexpectedly low codon usage bias.</title>
        <authorList>
            <person name="Landais I."/>
            <person name="Ogliastro M."/>
            <person name="Mita K."/>
            <person name="Nohata J."/>
            <person name="Lopez-Ferber M."/>
            <person name="Duonor-Cerutti M."/>
            <person name="Shimada T."/>
            <person name="Fournier P."/>
            <person name="Devauchelle G."/>
        </authorList>
    </citation>
    <scope>NUCLEOTIDE SEQUENCE [LARGE SCALE MRNA]</scope>
</reference>
<comment type="subcellular location">
    <subcellularLocation>
        <location evidence="1">Cytoplasm</location>
    </subcellularLocation>
</comment>
<comment type="similarity">
    <text evidence="3">Belongs to the eukaryotic ribosomal protein eS10 family.</text>
</comment>
<organism>
    <name type="scientific">Spodoptera frugiperda</name>
    <name type="common">Fall armyworm</name>
    <dbReference type="NCBI Taxonomy" id="7108"/>
    <lineage>
        <taxon>Eukaryota</taxon>
        <taxon>Metazoa</taxon>
        <taxon>Ecdysozoa</taxon>
        <taxon>Arthropoda</taxon>
        <taxon>Hexapoda</taxon>
        <taxon>Insecta</taxon>
        <taxon>Pterygota</taxon>
        <taxon>Neoptera</taxon>
        <taxon>Endopterygota</taxon>
        <taxon>Lepidoptera</taxon>
        <taxon>Glossata</taxon>
        <taxon>Ditrysia</taxon>
        <taxon>Noctuoidea</taxon>
        <taxon>Noctuidae</taxon>
        <taxon>Amphipyrinae</taxon>
        <taxon>Spodoptera</taxon>
    </lineage>
</organism>
<sequence length="158" mass="17988">MLMPKQNRVAIYEYLFKEGVMVAKKDYHAPKHPDLEKIPNLQVIKAMQSLKSRGYVKEQFAWRHFYWYLTNEGIEYLRIFLHLPPEIVPATLKRSVRAETVRRGAVGRPDAPARSAEDRSAYRRAPTTPAAHDKKADVGPGSADLEFRGGFGRGRPAP</sequence>
<proteinExistence type="evidence at transcript level"/>
<accession>Q962R9</accession>
<dbReference type="EMBL" id="AF400207">
    <property type="protein sequence ID" value="AAK92179.1"/>
    <property type="molecule type" value="mRNA"/>
</dbReference>
<dbReference type="SMR" id="Q962R9"/>
<dbReference type="EnsemblMetazoa" id="XM_035575482.2">
    <property type="protein sequence ID" value="XP_035431375.2"/>
    <property type="gene ID" value="LOC118263462"/>
</dbReference>
<dbReference type="OrthoDB" id="5211809at2759"/>
<dbReference type="Proteomes" id="UP000829999">
    <property type="component" value="Unplaced"/>
</dbReference>
<dbReference type="GO" id="GO:0022627">
    <property type="term" value="C:cytosolic small ribosomal subunit"/>
    <property type="evidence" value="ECO:0007669"/>
    <property type="project" value="TreeGrafter"/>
</dbReference>
<dbReference type="GO" id="GO:0003723">
    <property type="term" value="F:RNA binding"/>
    <property type="evidence" value="ECO:0007669"/>
    <property type="project" value="TreeGrafter"/>
</dbReference>
<dbReference type="GO" id="GO:0003735">
    <property type="term" value="F:structural constituent of ribosome"/>
    <property type="evidence" value="ECO:0007669"/>
    <property type="project" value="TreeGrafter"/>
</dbReference>
<dbReference type="FunFam" id="1.10.10.10:FF:000025">
    <property type="entry name" value="40S ribosomal protein S10"/>
    <property type="match status" value="1"/>
</dbReference>
<dbReference type="Gene3D" id="1.10.10.10">
    <property type="entry name" value="Winged helix-like DNA-binding domain superfamily/Winged helix DNA-binding domain"/>
    <property type="match status" value="1"/>
</dbReference>
<dbReference type="InterPro" id="IPR005326">
    <property type="entry name" value="Plectin_eS10_N"/>
</dbReference>
<dbReference type="InterPro" id="IPR037447">
    <property type="entry name" value="Ribosomal_eS10"/>
</dbReference>
<dbReference type="InterPro" id="IPR036388">
    <property type="entry name" value="WH-like_DNA-bd_sf"/>
</dbReference>
<dbReference type="PANTHER" id="PTHR12146">
    <property type="entry name" value="40S RIBOSOMAL PROTEIN S10"/>
    <property type="match status" value="1"/>
</dbReference>
<dbReference type="PANTHER" id="PTHR12146:SF0">
    <property type="entry name" value="RIBOSOMAL PROTEIN S10"/>
    <property type="match status" value="1"/>
</dbReference>
<dbReference type="Pfam" id="PF03501">
    <property type="entry name" value="S10_plectin"/>
    <property type="match status" value="1"/>
</dbReference>
<gene>
    <name type="primary">RpS10</name>
</gene>
<feature type="chain" id="PRO_0000116368" description="Small ribosomal subunit protein eS10">
    <location>
        <begin position="1"/>
        <end position="158"/>
    </location>
</feature>
<feature type="region of interest" description="Disordered" evidence="2">
    <location>
        <begin position="99"/>
        <end position="158"/>
    </location>
</feature>
<feature type="compositionally biased region" description="Gly residues" evidence="2">
    <location>
        <begin position="149"/>
        <end position="158"/>
    </location>
</feature>
<keyword id="KW-0963">Cytoplasm</keyword>
<keyword id="KW-0687">Ribonucleoprotein</keyword>
<keyword id="KW-0689">Ribosomal protein</keyword>
<name>RS10_SPOFR</name>
<evidence type="ECO:0000250" key="1"/>
<evidence type="ECO:0000256" key="2">
    <source>
        <dbReference type="SAM" id="MobiDB-lite"/>
    </source>
</evidence>
<evidence type="ECO:0000305" key="3"/>
<protein>
    <recommendedName>
        <fullName evidence="3">Small ribosomal subunit protein eS10</fullName>
    </recommendedName>
    <alternativeName>
        <fullName>40S ribosomal protein S10</fullName>
    </alternativeName>
</protein>